<gene>
    <name evidence="7" type="primary">daf-41</name>
    <name evidence="5" type="synonym">p23</name>
    <name evidence="7" type="ORF">ZC395.10</name>
</gene>
<dbReference type="EMBL" id="FO080775">
    <property type="protein sequence ID" value="CCD66668.1"/>
    <property type="molecule type" value="Genomic_DNA"/>
</dbReference>
<dbReference type="PIR" id="T27543">
    <property type="entry name" value="T27543"/>
</dbReference>
<dbReference type="RefSeq" id="NP_498126.1">
    <property type="nucleotide sequence ID" value="NM_065725.5"/>
</dbReference>
<dbReference type="SMR" id="Q23280"/>
<dbReference type="BioGRID" id="40958">
    <property type="interactions" value="8"/>
</dbReference>
<dbReference type="ComplexPortal" id="CPX-4004">
    <property type="entry name" value="Hsp90-daf-41 chaperone complex"/>
</dbReference>
<dbReference type="FunCoup" id="Q23280">
    <property type="interactions" value="2862"/>
</dbReference>
<dbReference type="STRING" id="6239.ZC395.10.2"/>
<dbReference type="PaxDb" id="6239-ZC395.10.1"/>
<dbReference type="PeptideAtlas" id="Q23280"/>
<dbReference type="EnsemblMetazoa" id="ZC395.10.1">
    <property type="protein sequence ID" value="ZC395.10.1"/>
    <property type="gene ID" value="WBGene00022599"/>
</dbReference>
<dbReference type="GeneID" id="175727"/>
<dbReference type="KEGG" id="cel:CELE_ZC395.10"/>
<dbReference type="UCSC" id="ZC395.10.1">
    <property type="organism name" value="c. elegans"/>
</dbReference>
<dbReference type="AGR" id="WB:WBGene00022599"/>
<dbReference type="CTD" id="175727"/>
<dbReference type="WormBase" id="ZC395.10">
    <property type="protein sequence ID" value="CE01436"/>
    <property type="gene ID" value="WBGene00022599"/>
    <property type="gene designation" value="daf-41"/>
</dbReference>
<dbReference type="eggNOG" id="KOG3158">
    <property type="taxonomic scope" value="Eukaryota"/>
</dbReference>
<dbReference type="GeneTree" id="ENSGT00880000138731"/>
<dbReference type="HOGENOM" id="CLU_078883_0_1_1"/>
<dbReference type="InParanoid" id="Q23280"/>
<dbReference type="OMA" id="EVTINFY"/>
<dbReference type="OrthoDB" id="1564555at2759"/>
<dbReference type="PhylomeDB" id="Q23280"/>
<dbReference type="Reactome" id="R-CEL-2162123">
    <property type="pathway name" value="Synthesis of Prostaglandins (PG) and Thromboxanes (TX)"/>
</dbReference>
<dbReference type="Reactome" id="R-CEL-3371511">
    <property type="pathway name" value="HSF1 activation"/>
</dbReference>
<dbReference type="Reactome" id="R-CEL-8937144">
    <property type="pathway name" value="Aryl hydrocarbon receptor signalling"/>
</dbReference>
<dbReference type="PRO" id="PR:Q23280"/>
<dbReference type="Proteomes" id="UP000001940">
    <property type="component" value="Chromosome III"/>
</dbReference>
<dbReference type="Bgee" id="WBGene00022599">
    <property type="expression patterns" value="Expressed in germ line (C elegans) and 4 other cell types or tissues"/>
</dbReference>
<dbReference type="GO" id="GO:0005829">
    <property type="term" value="C:cytosol"/>
    <property type="evidence" value="ECO:0000318"/>
    <property type="project" value="GO_Central"/>
</dbReference>
<dbReference type="GO" id="GO:0030016">
    <property type="term" value="C:myofibril"/>
    <property type="evidence" value="ECO:0007005"/>
    <property type="project" value="WormBase"/>
</dbReference>
<dbReference type="GO" id="GO:0005634">
    <property type="term" value="C:nucleus"/>
    <property type="evidence" value="ECO:0000318"/>
    <property type="project" value="GO_Central"/>
</dbReference>
<dbReference type="GO" id="GO:0101031">
    <property type="term" value="C:protein folding chaperone complex"/>
    <property type="evidence" value="ECO:0000353"/>
    <property type="project" value="ComplexPortal"/>
</dbReference>
<dbReference type="GO" id="GO:0051879">
    <property type="term" value="F:Hsp90 protein binding"/>
    <property type="evidence" value="ECO:0000318"/>
    <property type="project" value="GO_Central"/>
</dbReference>
<dbReference type="GO" id="GO:0051087">
    <property type="term" value="F:protein-folding chaperone binding"/>
    <property type="evidence" value="ECO:0000318"/>
    <property type="project" value="GO_Central"/>
</dbReference>
<dbReference type="GO" id="GO:0051131">
    <property type="term" value="P:chaperone-mediated protein complex assembly"/>
    <property type="evidence" value="ECO:0000318"/>
    <property type="project" value="GO_Central"/>
</dbReference>
<dbReference type="GO" id="GO:0006457">
    <property type="term" value="P:protein folding"/>
    <property type="evidence" value="ECO:0000318"/>
    <property type="project" value="GO_Central"/>
</dbReference>
<dbReference type="CDD" id="cd06465">
    <property type="entry name" value="p23_hB-ind1_like"/>
    <property type="match status" value="1"/>
</dbReference>
<dbReference type="FunFam" id="2.60.40.790:FF:000013">
    <property type="entry name" value="Very-long-chain (3R)-3-hydroxyacyl-CoA dehydratase"/>
    <property type="match status" value="1"/>
</dbReference>
<dbReference type="Gene3D" id="2.60.40.790">
    <property type="match status" value="1"/>
</dbReference>
<dbReference type="InterPro" id="IPR007052">
    <property type="entry name" value="CS_dom"/>
</dbReference>
<dbReference type="InterPro" id="IPR008978">
    <property type="entry name" value="HSP20-like_chaperone"/>
</dbReference>
<dbReference type="InterPro" id="IPR045250">
    <property type="entry name" value="p23-like"/>
</dbReference>
<dbReference type="PANTHER" id="PTHR22932:SF1">
    <property type="entry name" value="CO-CHAPERONE PROTEIN DAF-41"/>
    <property type="match status" value="1"/>
</dbReference>
<dbReference type="PANTHER" id="PTHR22932">
    <property type="entry name" value="TELOMERASE-BINDING PROTEIN P23 HSP90 CO-CHAPERONE"/>
    <property type="match status" value="1"/>
</dbReference>
<dbReference type="Pfam" id="PF04969">
    <property type="entry name" value="CS"/>
    <property type="match status" value="1"/>
</dbReference>
<dbReference type="SUPFAM" id="SSF49764">
    <property type="entry name" value="HSP20-like chaperones"/>
    <property type="match status" value="1"/>
</dbReference>
<dbReference type="PROSITE" id="PS51203">
    <property type="entry name" value="CS"/>
    <property type="match status" value="1"/>
</dbReference>
<evidence type="ECO:0000255" key="1">
    <source>
        <dbReference type="PROSITE-ProRule" id="PRU00547"/>
    </source>
</evidence>
<evidence type="ECO:0000256" key="2">
    <source>
        <dbReference type="SAM" id="MobiDB-lite"/>
    </source>
</evidence>
<evidence type="ECO:0000269" key="3">
    <source>
    </source>
</evidence>
<evidence type="ECO:0000269" key="4">
    <source>
    </source>
</evidence>
<evidence type="ECO:0000303" key="5">
    <source>
    </source>
</evidence>
<evidence type="ECO:0000305" key="6"/>
<evidence type="ECO:0000312" key="7">
    <source>
        <dbReference type="WormBase" id="ZC395.10"/>
    </source>
</evidence>
<organism>
    <name type="scientific">Caenorhabditis elegans</name>
    <dbReference type="NCBI Taxonomy" id="6239"/>
    <lineage>
        <taxon>Eukaryota</taxon>
        <taxon>Metazoa</taxon>
        <taxon>Ecdysozoa</taxon>
        <taxon>Nematoda</taxon>
        <taxon>Chromadorea</taxon>
        <taxon>Rhabditida</taxon>
        <taxon>Rhabditina</taxon>
        <taxon>Rhabditomorpha</taxon>
        <taxon>Rhabditoidea</taxon>
        <taxon>Rhabditidae</taxon>
        <taxon>Peloderinae</taxon>
        <taxon>Caenorhabditis</taxon>
    </lineage>
</organism>
<name>DAF41_CAEEL</name>
<feature type="chain" id="PRO_0000218955" description="Co-chaperone protein daf-41" evidence="6">
    <location>
        <begin position="1"/>
        <end position="175"/>
    </location>
</feature>
<feature type="domain" description="CS" evidence="1">
    <location>
        <begin position="2"/>
        <end position="89"/>
    </location>
</feature>
<feature type="region of interest" description="Disordered" evidence="2">
    <location>
        <begin position="109"/>
        <end position="175"/>
    </location>
</feature>
<feature type="compositionally biased region" description="Acidic residues" evidence="2">
    <location>
        <begin position="148"/>
        <end position="168"/>
    </location>
</feature>
<comment type="function">
    <text evidence="3 4">Co-chaperone for hsp90/daf-21 (PubMed:20880838). Involved in regulation of longevity, larval entry and exit from the dauer stage of development and response to environmental cues, such as oxidative stress, in a temperature-dependent manner. Role in daf-16 and hsf-1 inhibition at elevated temperatures (PubMed:25830239).</text>
</comment>
<comment type="tissue specificity">
    <text evidence="4">Expressed in anterior and posterior neurons including ASE, AWC, ASI and ADL amphids and phasmid sensory neurons, peripheral neurons and ventral cord motorneurons. Additionally expressed in body wall muscle, pharynx, vulva, germ cells and intestine.</text>
</comment>
<comment type="developmental stage">
    <text evidence="4">Expressed from embryo to adulthood.</text>
</comment>
<comment type="disruption phenotype">
    <text evidence="4">Resistant to oxidative and heat stress. At increased temperatures, there is increased longevity and an increased propensity of larvae to form dauer. At decreased temperatures, lifespan is shorter. Defective chemotaxis in response to toxins.</text>
</comment>
<comment type="similarity">
    <text evidence="6">Belongs to the p23/wos2 family.</text>
</comment>
<keyword id="KW-1185">Reference proteome</keyword>
<proteinExistence type="evidence at transcript level"/>
<sequence length="175" mass="19431">MAKQPTVLWAQRESLVYLTIEVDEAKIEELKGEGNKLHFQGSSKTDKYEATLEFFDEIDPASVKHTGSSTRVVEITVQKKTPAWWPRLLQNKGKVHWLKVDFGKWKDEDEDDEAEDAGAGIGGGMANGFDLNQYMSQMGGAGGADFGGLEDDEEDDDMPDLEDNEEEEGKNGTRA</sequence>
<protein>
    <recommendedName>
        <fullName evidence="6">Co-chaperone protein daf-41</fullName>
    </recommendedName>
    <alternativeName>
        <fullName evidence="6">Abnormal dauer formation protein daf-41</fullName>
    </alternativeName>
    <alternativeName>
        <fullName evidence="5">p23/cytosolic prostaglandin E synthase 3 homolog</fullName>
    </alternativeName>
</protein>
<reference key="1">
    <citation type="journal article" date="1998" name="Science">
        <title>Genome sequence of the nematode C. elegans: a platform for investigating biology.</title>
        <authorList>
            <consortium name="The C. elegans sequencing consortium"/>
        </authorList>
    </citation>
    <scope>NUCLEOTIDE SEQUENCE [LARGE SCALE GENOMIC DNA]</scope>
    <source>
        <strain>Bristol N2</strain>
    </source>
</reference>
<reference key="2">
    <citation type="journal article" date="2010" name="J. Biol. Chem.">
        <title>Cdc37-Hsp90 complexes are responsive to nucleotide-induced conformational changes and binding of further cofactors.</title>
        <authorList>
            <person name="Gaiser A.M."/>
            <person name="Kretzschmar A."/>
            <person name="Richter K."/>
        </authorList>
    </citation>
    <scope>FUNCTION</scope>
</reference>
<reference key="3">
    <citation type="journal article" date="2015" name="PLoS Genet.">
        <title>Co-chaperone p23 regulates C. elegans lifespan in response to temperature.</title>
        <authorList>
            <person name="Horikawa M."/>
            <person name="Sural S."/>
            <person name="Hsu A.L."/>
            <person name="Antebi A."/>
        </authorList>
    </citation>
    <scope>FUNCTION</scope>
    <scope>TISSUE SPECIFICITY</scope>
    <scope>DEVELOPMENTAL STAGE</scope>
    <scope>DISRUPTION PHENOTYPE</scope>
</reference>
<accession>Q23280</accession>